<protein>
    <recommendedName>
        <fullName evidence="1">Heat-inducible transcription repressor HrcA</fullName>
    </recommendedName>
</protein>
<organism>
    <name type="scientific">Listeria monocytogenes serotype 4b (strain F2365)</name>
    <dbReference type="NCBI Taxonomy" id="265669"/>
    <lineage>
        <taxon>Bacteria</taxon>
        <taxon>Bacillati</taxon>
        <taxon>Bacillota</taxon>
        <taxon>Bacilli</taxon>
        <taxon>Bacillales</taxon>
        <taxon>Listeriaceae</taxon>
        <taxon>Listeria</taxon>
    </lineage>
</organism>
<proteinExistence type="inferred from homology"/>
<feature type="chain" id="PRO_0000182496" description="Heat-inducible transcription repressor HrcA">
    <location>
        <begin position="1"/>
        <end position="345"/>
    </location>
</feature>
<accession>Q71ZJ5</accession>
<dbReference type="EMBL" id="AE017262">
    <property type="protein sequence ID" value="AAT04269.1"/>
    <property type="molecule type" value="Genomic_DNA"/>
</dbReference>
<dbReference type="RefSeq" id="WP_003726026.1">
    <property type="nucleotide sequence ID" value="NC_002973.6"/>
</dbReference>
<dbReference type="SMR" id="Q71ZJ5"/>
<dbReference type="KEGG" id="lmf:LMOf2365_1494"/>
<dbReference type="HOGENOM" id="CLU_050019_1_0_9"/>
<dbReference type="GO" id="GO:0003677">
    <property type="term" value="F:DNA binding"/>
    <property type="evidence" value="ECO:0007669"/>
    <property type="project" value="InterPro"/>
</dbReference>
<dbReference type="GO" id="GO:0045892">
    <property type="term" value="P:negative regulation of DNA-templated transcription"/>
    <property type="evidence" value="ECO:0007669"/>
    <property type="project" value="UniProtKB-UniRule"/>
</dbReference>
<dbReference type="FunFam" id="1.10.10.10:FF:000049">
    <property type="entry name" value="Heat-inducible transcription repressor HrcA"/>
    <property type="match status" value="1"/>
</dbReference>
<dbReference type="Gene3D" id="3.30.450.40">
    <property type="match status" value="1"/>
</dbReference>
<dbReference type="Gene3D" id="3.30.390.60">
    <property type="entry name" value="Heat-inducible transcription repressor hrca homolog, domain 3"/>
    <property type="match status" value="1"/>
</dbReference>
<dbReference type="Gene3D" id="1.10.10.10">
    <property type="entry name" value="Winged helix-like DNA-binding domain superfamily/Winged helix DNA-binding domain"/>
    <property type="match status" value="1"/>
</dbReference>
<dbReference type="HAMAP" id="MF_00081">
    <property type="entry name" value="HrcA"/>
    <property type="match status" value="1"/>
</dbReference>
<dbReference type="InterPro" id="IPR029016">
    <property type="entry name" value="GAF-like_dom_sf"/>
</dbReference>
<dbReference type="InterPro" id="IPR002571">
    <property type="entry name" value="HrcA"/>
</dbReference>
<dbReference type="InterPro" id="IPR021153">
    <property type="entry name" value="HrcA_C"/>
</dbReference>
<dbReference type="InterPro" id="IPR036388">
    <property type="entry name" value="WH-like_DNA-bd_sf"/>
</dbReference>
<dbReference type="InterPro" id="IPR036390">
    <property type="entry name" value="WH_DNA-bd_sf"/>
</dbReference>
<dbReference type="InterPro" id="IPR023120">
    <property type="entry name" value="WHTH_transcript_rep_HrcA_IDD"/>
</dbReference>
<dbReference type="NCBIfam" id="TIGR00331">
    <property type="entry name" value="hrcA"/>
    <property type="match status" value="1"/>
</dbReference>
<dbReference type="PANTHER" id="PTHR34824">
    <property type="entry name" value="HEAT-INDUCIBLE TRANSCRIPTION REPRESSOR HRCA"/>
    <property type="match status" value="1"/>
</dbReference>
<dbReference type="PANTHER" id="PTHR34824:SF1">
    <property type="entry name" value="HEAT-INDUCIBLE TRANSCRIPTION REPRESSOR HRCA"/>
    <property type="match status" value="1"/>
</dbReference>
<dbReference type="Pfam" id="PF01628">
    <property type="entry name" value="HrcA"/>
    <property type="match status" value="1"/>
</dbReference>
<dbReference type="PIRSF" id="PIRSF005485">
    <property type="entry name" value="HrcA"/>
    <property type="match status" value="1"/>
</dbReference>
<dbReference type="SUPFAM" id="SSF55781">
    <property type="entry name" value="GAF domain-like"/>
    <property type="match status" value="1"/>
</dbReference>
<dbReference type="SUPFAM" id="SSF46785">
    <property type="entry name" value="Winged helix' DNA-binding domain"/>
    <property type="match status" value="1"/>
</dbReference>
<comment type="function">
    <text evidence="1">Negative regulator of class I heat shock genes (grpE-dnaK-dnaJ and groELS operons). Prevents heat-shock induction of these operons.</text>
</comment>
<comment type="similarity">
    <text evidence="1">Belongs to the HrcA family.</text>
</comment>
<name>HRCA_LISMF</name>
<sequence>MLTERQLLIFRAIIDHFTWTIQPVGSKNLLKEKGLPYSSATIRNEMGVLEEYGFIEKTHSSSGRVPSEKGYRFYVDYLLQPKKLDKSDRQMIRSFFSENYYEMEGLIQNSALMLSDLTNYTSILLGPEATKNHLSGFRFVPINNFQAMLILITDQGHVDNHLVTIPEGTTLSDIERMVNILNERLVGLSLDDLKVQIPMEVKELLGKHVRNYESFMHVFSDSFAQASQQKVYFGGKTNILNQPEFHDINKVREMLHLMEEEQDVYELFRDIPDGLQVKIGRENNNSLMEDCSIITATYNIAGERVGGIVLLGPTRMEYSRMMGLVDVMSRDLTDVLTKLYRDNQN</sequence>
<keyword id="KW-0678">Repressor</keyword>
<keyword id="KW-0346">Stress response</keyword>
<keyword id="KW-0804">Transcription</keyword>
<keyword id="KW-0805">Transcription regulation</keyword>
<gene>
    <name evidence="1" type="primary">hrcA</name>
    <name type="ordered locus">LMOf2365_1494</name>
</gene>
<reference key="1">
    <citation type="journal article" date="2004" name="Nucleic Acids Res.">
        <title>Whole genome comparisons of serotype 4b and 1/2a strains of the food-borne pathogen Listeria monocytogenes reveal new insights into the core genome components of this species.</title>
        <authorList>
            <person name="Nelson K.E."/>
            <person name="Fouts D.E."/>
            <person name="Mongodin E.F."/>
            <person name="Ravel J."/>
            <person name="DeBoy R.T."/>
            <person name="Kolonay J.F."/>
            <person name="Rasko D.A."/>
            <person name="Angiuoli S.V."/>
            <person name="Gill S.R."/>
            <person name="Paulsen I.T."/>
            <person name="Peterson J.D."/>
            <person name="White O."/>
            <person name="Nelson W.C."/>
            <person name="Nierman W.C."/>
            <person name="Beanan M.J."/>
            <person name="Brinkac L.M."/>
            <person name="Daugherty S.C."/>
            <person name="Dodson R.J."/>
            <person name="Durkin A.S."/>
            <person name="Madupu R."/>
            <person name="Haft D.H."/>
            <person name="Selengut J."/>
            <person name="Van Aken S.E."/>
            <person name="Khouri H.M."/>
            <person name="Fedorova N."/>
            <person name="Forberger H.A."/>
            <person name="Tran B."/>
            <person name="Kathariou S."/>
            <person name="Wonderling L.D."/>
            <person name="Uhlich G.A."/>
            <person name="Bayles D.O."/>
            <person name="Luchansky J.B."/>
            <person name="Fraser C.M."/>
        </authorList>
    </citation>
    <scope>NUCLEOTIDE SEQUENCE [LARGE SCALE GENOMIC DNA]</scope>
    <source>
        <strain>F2365</strain>
    </source>
</reference>
<evidence type="ECO:0000255" key="1">
    <source>
        <dbReference type="HAMAP-Rule" id="MF_00081"/>
    </source>
</evidence>